<comment type="function">
    <text evidence="1">Binds directly to 23S ribosomal RNA and is necessary for the in vitro assembly process of the 50S ribosomal subunit. It is not involved in the protein synthesizing functions of that subunit.</text>
</comment>
<comment type="similarity">
    <text evidence="1">Belongs to the bacterial ribosomal protein bL20 family.</text>
</comment>
<dbReference type="EMBL" id="CP000048">
    <property type="protein sequence ID" value="AAX16705.1"/>
    <property type="molecule type" value="Genomic_DNA"/>
</dbReference>
<dbReference type="RefSeq" id="WP_012421962.1">
    <property type="nucleotide sequence ID" value="NZ_CP073136.1"/>
</dbReference>
<dbReference type="SMR" id="B2RZP9"/>
<dbReference type="GeneID" id="71842995"/>
<dbReference type="KEGG" id="bhr:BH0188"/>
<dbReference type="HOGENOM" id="CLU_123265_0_1_12"/>
<dbReference type="Proteomes" id="UP000008834">
    <property type="component" value="Chromosome"/>
</dbReference>
<dbReference type="GO" id="GO:1990904">
    <property type="term" value="C:ribonucleoprotein complex"/>
    <property type="evidence" value="ECO:0007669"/>
    <property type="project" value="UniProtKB-KW"/>
</dbReference>
<dbReference type="GO" id="GO:0005840">
    <property type="term" value="C:ribosome"/>
    <property type="evidence" value="ECO:0007669"/>
    <property type="project" value="UniProtKB-KW"/>
</dbReference>
<dbReference type="GO" id="GO:0019843">
    <property type="term" value="F:rRNA binding"/>
    <property type="evidence" value="ECO:0007669"/>
    <property type="project" value="UniProtKB-UniRule"/>
</dbReference>
<dbReference type="GO" id="GO:0003735">
    <property type="term" value="F:structural constituent of ribosome"/>
    <property type="evidence" value="ECO:0007669"/>
    <property type="project" value="InterPro"/>
</dbReference>
<dbReference type="GO" id="GO:0000027">
    <property type="term" value="P:ribosomal large subunit assembly"/>
    <property type="evidence" value="ECO:0007669"/>
    <property type="project" value="UniProtKB-UniRule"/>
</dbReference>
<dbReference type="GO" id="GO:0006412">
    <property type="term" value="P:translation"/>
    <property type="evidence" value="ECO:0007669"/>
    <property type="project" value="InterPro"/>
</dbReference>
<dbReference type="CDD" id="cd07026">
    <property type="entry name" value="Ribosomal_L20"/>
    <property type="match status" value="1"/>
</dbReference>
<dbReference type="FunFam" id="1.10.1900.20:FF:000001">
    <property type="entry name" value="50S ribosomal protein L20"/>
    <property type="match status" value="1"/>
</dbReference>
<dbReference type="Gene3D" id="6.10.160.10">
    <property type="match status" value="1"/>
</dbReference>
<dbReference type="Gene3D" id="1.10.1900.20">
    <property type="entry name" value="Ribosomal protein L20"/>
    <property type="match status" value="1"/>
</dbReference>
<dbReference type="HAMAP" id="MF_00382">
    <property type="entry name" value="Ribosomal_bL20"/>
    <property type="match status" value="1"/>
</dbReference>
<dbReference type="InterPro" id="IPR005813">
    <property type="entry name" value="Ribosomal_bL20"/>
</dbReference>
<dbReference type="InterPro" id="IPR035566">
    <property type="entry name" value="Ribosomal_protein_bL20_C"/>
</dbReference>
<dbReference type="NCBIfam" id="TIGR01032">
    <property type="entry name" value="rplT_bact"/>
    <property type="match status" value="1"/>
</dbReference>
<dbReference type="PANTHER" id="PTHR10986">
    <property type="entry name" value="39S RIBOSOMAL PROTEIN L20"/>
    <property type="match status" value="1"/>
</dbReference>
<dbReference type="Pfam" id="PF00453">
    <property type="entry name" value="Ribosomal_L20"/>
    <property type="match status" value="1"/>
</dbReference>
<dbReference type="PRINTS" id="PR00062">
    <property type="entry name" value="RIBOSOMALL20"/>
</dbReference>
<dbReference type="SUPFAM" id="SSF74731">
    <property type="entry name" value="Ribosomal protein L20"/>
    <property type="match status" value="1"/>
</dbReference>
<sequence length="115" mass="13540">MARVKNGIVHVARRKRLLKKTKGFWGTKKSNYKKAKDTLRKGMMYATRDRKARKRDFRSLWIVRISAALTGMGITYSRFFEGLKKSNIKLNRKILSNLAIEDIETFKKIVYEIKN</sequence>
<organism>
    <name type="scientific">Borrelia hermsii (strain HS1 / DAH)</name>
    <dbReference type="NCBI Taxonomy" id="314723"/>
    <lineage>
        <taxon>Bacteria</taxon>
        <taxon>Pseudomonadati</taxon>
        <taxon>Spirochaetota</taxon>
        <taxon>Spirochaetia</taxon>
        <taxon>Spirochaetales</taxon>
        <taxon>Borreliaceae</taxon>
        <taxon>Borrelia</taxon>
    </lineage>
</organism>
<reference key="1">
    <citation type="submission" date="2004-12" db="EMBL/GenBank/DDBJ databases">
        <title>The genome sequence of Borrelia hermsii and Borrelia turicatae: comparative analysis of two agents of endemic N. America relapsing fever.</title>
        <authorList>
            <person name="Porcella S.F."/>
            <person name="Raffel S.J."/>
            <person name="Schrumpf M.E."/>
            <person name="Montgomery B."/>
            <person name="Smith T."/>
            <person name="Schwan T.G."/>
        </authorList>
    </citation>
    <scope>NUCLEOTIDE SEQUENCE [LARGE SCALE GENOMIC DNA]</scope>
    <source>
        <strain>HS1 / DAH</strain>
    </source>
</reference>
<feature type="chain" id="PRO_1000122278" description="Large ribosomal subunit protein bL20">
    <location>
        <begin position="1"/>
        <end position="115"/>
    </location>
</feature>
<protein>
    <recommendedName>
        <fullName evidence="1">Large ribosomal subunit protein bL20</fullName>
    </recommendedName>
    <alternativeName>
        <fullName evidence="2">50S ribosomal protein L20</fullName>
    </alternativeName>
</protein>
<evidence type="ECO:0000255" key="1">
    <source>
        <dbReference type="HAMAP-Rule" id="MF_00382"/>
    </source>
</evidence>
<evidence type="ECO:0000305" key="2"/>
<name>RL20_BORHD</name>
<keyword id="KW-0687">Ribonucleoprotein</keyword>
<keyword id="KW-0689">Ribosomal protein</keyword>
<keyword id="KW-0694">RNA-binding</keyword>
<keyword id="KW-0699">rRNA-binding</keyword>
<proteinExistence type="inferred from homology"/>
<gene>
    <name evidence="1" type="primary">rplT</name>
    <name type="ordered locus">BH0188</name>
</gene>
<accession>B2RZP9</accession>